<accession>Q32GI7</accession>
<name>ZNTB_SHIDS</name>
<feature type="chain" id="PRO_0000239249" description="Zinc transport protein ZntB">
    <location>
        <begin position="1"/>
        <end position="327"/>
    </location>
</feature>
<feature type="topological domain" description="Cytoplasmic" evidence="1">
    <location>
        <begin position="1"/>
        <end position="273"/>
    </location>
</feature>
<feature type="transmembrane region" description="Helical" evidence="1">
    <location>
        <begin position="274"/>
        <end position="294"/>
    </location>
</feature>
<feature type="topological domain" description="Periplasmic" evidence="1">
    <location>
        <begin position="295"/>
        <end position="300"/>
    </location>
</feature>
<feature type="transmembrane region" description="Helical" evidence="1">
    <location>
        <begin position="301"/>
        <end position="321"/>
    </location>
</feature>
<feature type="topological domain" description="Cytoplasmic" evidence="1">
    <location>
        <begin position="322"/>
        <end position="327"/>
    </location>
</feature>
<organism>
    <name type="scientific">Shigella dysenteriae serotype 1 (strain Sd197)</name>
    <dbReference type="NCBI Taxonomy" id="300267"/>
    <lineage>
        <taxon>Bacteria</taxon>
        <taxon>Pseudomonadati</taxon>
        <taxon>Pseudomonadota</taxon>
        <taxon>Gammaproteobacteria</taxon>
        <taxon>Enterobacterales</taxon>
        <taxon>Enterobacteriaceae</taxon>
        <taxon>Shigella</taxon>
    </lineage>
</organism>
<protein>
    <recommendedName>
        <fullName evidence="1">Zinc transport protein ZntB</fullName>
    </recommendedName>
</protein>
<dbReference type="EMBL" id="CP000034">
    <property type="protein sequence ID" value="ABB61568.1"/>
    <property type="molecule type" value="Genomic_DNA"/>
</dbReference>
<dbReference type="RefSeq" id="WP_000387388.1">
    <property type="nucleotide sequence ID" value="NC_007606.1"/>
</dbReference>
<dbReference type="RefSeq" id="YP_403059.1">
    <property type="nucleotide sequence ID" value="NC_007606.1"/>
</dbReference>
<dbReference type="SMR" id="Q32GI7"/>
<dbReference type="STRING" id="300267.SDY_1424"/>
<dbReference type="EnsemblBacteria" id="ABB61568">
    <property type="protein sequence ID" value="ABB61568"/>
    <property type="gene ID" value="SDY_1424"/>
</dbReference>
<dbReference type="GeneID" id="93775479"/>
<dbReference type="KEGG" id="sdy:SDY_1424"/>
<dbReference type="PATRIC" id="fig|300267.13.peg.1694"/>
<dbReference type="HOGENOM" id="CLU_007127_2_0_6"/>
<dbReference type="Proteomes" id="UP000002716">
    <property type="component" value="Chromosome"/>
</dbReference>
<dbReference type="GO" id="GO:0005886">
    <property type="term" value="C:plasma membrane"/>
    <property type="evidence" value="ECO:0007669"/>
    <property type="project" value="UniProtKB-SubCell"/>
</dbReference>
<dbReference type="GO" id="GO:0050897">
    <property type="term" value="F:cobalt ion binding"/>
    <property type="evidence" value="ECO:0007669"/>
    <property type="project" value="TreeGrafter"/>
</dbReference>
<dbReference type="GO" id="GO:0015087">
    <property type="term" value="F:cobalt ion transmembrane transporter activity"/>
    <property type="evidence" value="ECO:0007669"/>
    <property type="project" value="TreeGrafter"/>
</dbReference>
<dbReference type="GO" id="GO:0000287">
    <property type="term" value="F:magnesium ion binding"/>
    <property type="evidence" value="ECO:0007669"/>
    <property type="project" value="TreeGrafter"/>
</dbReference>
<dbReference type="GO" id="GO:0015095">
    <property type="term" value="F:magnesium ion transmembrane transporter activity"/>
    <property type="evidence" value="ECO:0007669"/>
    <property type="project" value="TreeGrafter"/>
</dbReference>
<dbReference type="GO" id="GO:0005385">
    <property type="term" value="F:zinc ion transmembrane transporter activity"/>
    <property type="evidence" value="ECO:0007669"/>
    <property type="project" value="UniProtKB-UniRule"/>
</dbReference>
<dbReference type="CDD" id="cd12833">
    <property type="entry name" value="ZntB-like_1"/>
    <property type="match status" value="1"/>
</dbReference>
<dbReference type="FunFam" id="1.20.58.340:FF:000002">
    <property type="entry name" value="Zinc transport protein ZntB"/>
    <property type="match status" value="1"/>
</dbReference>
<dbReference type="FunFam" id="1.20.58.340:FF:000003">
    <property type="entry name" value="Zinc transport protein ZntB"/>
    <property type="match status" value="1"/>
</dbReference>
<dbReference type="FunFam" id="3.30.460.20:FF:000001">
    <property type="entry name" value="Zinc transport protein ZntB"/>
    <property type="match status" value="1"/>
</dbReference>
<dbReference type="Gene3D" id="3.30.460.20">
    <property type="entry name" value="CorA soluble domain-like"/>
    <property type="match status" value="1"/>
</dbReference>
<dbReference type="Gene3D" id="1.20.58.340">
    <property type="entry name" value="Magnesium transport protein CorA, transmembrane region"/>
    <property type="match status" value="2"/>
</dbReference>
<dbReference type="HAMAP" id="MF_01565">
    <property type="entry name" value="ZntB"/>
    <property type="match status" value="1"/>
</dbReference>
<dbReference type="InterPro" id="IPR045861">
    <property type="entry name" value="CorA_cytoplasmic_dom"/>
</dbReference>
<dbReference type="InterPro" id="IPR045863">
    <property type="entry name" value="CorA_TM1_TM2"/>
</dbReference>
<dbReference type="InterPro" id="IPR002523">
    <property type="entry name" value="MgTranspt_CorA/ZnTranspt_ZntB"/>
</dbReference>
<dbReference type="InterPro" id="IPR023714">
    <property type="entry name" value="Zn_transp_ZntB"/>
</dbReference>
<dbReference type="NCBIfam" id="NF007092">
    <property type="entry name" value="PRK09546.1"/>
    <property type="match status" value="1"/>
</dbReference>
<dbReference type="PANTHER" id="PTHR46494">
    <property type="entry name" value="CORA FAMILY METAL ION TRANSPORTER (EUROFUNG)"/>
    <property type="match status" value="1"/>
</dbReference>
<dbReference type="PANTHER" id="PTHR46494:SF3">
    <property type="entry name" value="ZINC TRANSPORT PROTEIN ZNTB"/>
    <property type="match status" value="1"/>
</dbReference>
<dbReference type="Pfam" id="PF01544">
    <property type="entry name" value="CorA"/>
    <property type="match status" value="1"/>
</dbReference>
<dbReference type="SUPFAM" id="SSF143865">
    <property type="entry name" value="CorA soluble domain-like"/>
    <property type="match status" value="1"/>
</dbReference>
<dbReference type="SUPFAM" id="SSF144083">
    <property type="entry name" value="Magnesium transport protein CorA, transmembrane region"/>
    <property type="match status" value="1"/>
</dbReference>
<reference key="1">
    <citation type="journal article" date="2005" name="Nucleic Acids Res.">
        <title>Genome dynamics and diversity of Shigella species, the etiologic agents of bacillary dysentery.</title>
        <authorList>
            <person name="Yang F."/>
            <person name="Yang J."/>
            <person name="Zhang X."/>
            <person name="Chen L."/>
            <person name="Jiang Y."/>
            <person name="Yan Y."/>
            <person name="Tang X."/>
            <person name="Wang J."/>
            <person name="Xiong Z."/>
            <person name="Dong J."/>
            <person name="Xue Y."/>
            <person name="Zhu Y."/>
            <person name="Xu X."/>
            <person name="Sun L."/>
            <person name="Chen S."/>
            <person name="Nie H."/>
            <person name="Peng J."/>
            <person name="Xu J."/>
            <person name="Wang Y."/>
            <person name="Yuan Z."/>
            <person name="Wen Y."/>
            <person name="Yao Z."/>
            <person name="Shen Y."/>
            <person name="Qiang B."/>
            <person name="Hou Y."/>
            <person name="Yu J."/>
            <person name="Jin Q."/>
        </authorList>
    </citation>
    <scope>NUCLEOTIDE SEQUENCE [LARGE SCALE GENOMIC DNA]</scope>
    <source>
        <strain>Sd197</strain>
    </source>
</reference>
<proteinExistence type="inferred from homology"/>
<evidence type="ECO:0000255" key="1">
    <source>
        <dbReference type="HAMAP-Rule" id="MF_01565"/>
    </source>
</evidence>
<keyword id="KW-0997">Cell inner membrane</keyword>
<keyword id="KW-1003">Cell membrane</keyword>
<keyword id="KW-0406">Ion transport</keyword>
<keyword id="KW-0472">Membrane</keyword>
<keyword id="KW-1185">Reference proteome</keyword>
<keyword id="KW-0812">Transmembrane</keyword>
<keyword id="KW-1133">Transmembrane helix</keyword>
<keyword id="KW-0813">Transport</keyword>
<keyword id="KW-0862">Zinc</keyword>
<gene>
    <name evidence="1" type="primary">zntB</name>
    <name type="ordered locus">SDY_1424</name>
</gene>
<sequence>MEAIKGSDVNVPDAVFAWMLDGRGGVKPLENTDVIDEAHPCWLHLNYVHHDSAQWLATTPLLPNNVRDALAGESTRPRVSRLGEGTLITLRCINGSTDERPDQLVAMRVYMDGRLIVSTRQRKVLALDDVVSDLEEGTGPTDCGGWLVDVCDALTDHSSEFIEQLHDKIIDLEDNLLDQQIPPRGFLALLRKQLIVMRRYMAPQRDVYARLASERLPWMSDDQRRRMQDIADRLGRGLDEIDACIARTGVMADEIAQVMQENLARRTYTMSLMAMVFLPSTFLTGLFGVNLGGIPGGGWQFGFSIFCILLVVLIGGVALWLHRSKWL</sequence>
<comment type="function">
    <text evidence="1">Zinc transporter. Acts as a Zn(2+):proton symporter, which likely mediates zinc ion uptake.</text>
</comment>
<comment type="catalytic activity">
    <reaction evidence="1">
        <text>Zn(2+)(out) + H(+)(out) = Zn(2+)(in) + H(+)(in)</text>
        <dbReference type="Rhea" id="RHEA:71195"/>
        <dbReference type="ChEBI" id="CHEBI:15378"/>
        <dbReference type="ChEBI" id="CHEBI:29105"/>
    </reaction>
    <physiologicalReaction direction="left-to-right" evidence="1">
        <dbReference type="Rhea" id="RHEA:71196"/>
    </physiologicalReaction>
</comment>
<comment type="subcellular location">
    <subcellularLocation>
        <location evidence="1">Cell inner membrane</location>
        <topology evidence="1">Multi-pass membrane protein</topology>
    </subcellularLocation>
</comment>
<comment type="similarity">
    <text evidence="1">Belongs to the CorA metal ion transporter (MIT) (TC 1.A.35) family.</text>
</comment>